<protein>
    <recommendedName>
        <fullName evidence="1">Pyridoxine/pyridoxamine 5'-phosphate oxidase</fullName>
        <ecNumber evidence="1">1.4.3.5</ecNumber>
    </recommendedName>
    <alternativeName>
        <fullName evidence="1">PNP/PMP oxidase</fullName>
        <shortName evidence="1">PNPOx</shortName>
    </alternativeName>
    <alternativeName>
        <fullName evidence="1">Pyridoxal 5'-phosphate synthase</fullName>
    </alternativeName>
</protein>
<feature type="chain" id="PRO_0000255849" description="Pyridoxine/pyridoxamine 5'-phosphate oxidase">
    <location>
        <begin position="1"/>
        <end position="209"/>
    </location>
</feature>
<feature type="binding site" evidence="1">
    <location>
        <begin position="5"/>
        <end position="8"/>
    </location>
    <ligand>
        <name>substrate</name>
    </ligand>
</feature>
<feature type="binding site" evidence="1">
    <location>
        <begin position="58"/>
        <end position="63"/>
    </location>
    <ligand>
        <name>FMN</name>
        <dbReference type="ChEBI" id="CHEBI:58210"/>
    </ligand>
</feature>
<feature type="binding site" evidence="1">
    <location>
        <position position="63"/>
    </location>
    <ligand>
        <name>substrate</name>
    </ligand>
</feature>
<feature type="binding site" evidence="1">
    <location>
        <begin position="73"/>
        <end position="74"/>
    </location>
    <ligand>
        <name>FMN</name>
        <dbReference type="ChEBI" id="CHEBI:58210"/>
    </ligand>
</feature>
<feature type="binding site" evidence="1">
    <location>
        <position position="79"/>
    </location>
    <ligand>
        <name>FMN</name>
        <dbReference type="ChEBI" id="CHEBI:58210"/>
    </ligand>
</feature>
<feature type="binding site" evidence="1">
    <location>
        <position position="80"/>
    </location>
    <ligand>
        <name>FMN</name>
        <dbReference type="ChEBI" id="CHEBI:58210"/>
    </ligand>
</feature>
<feature type="binding site" evidence="1">
    <location>
        <position position="102"/>
    </location>
    <ligand>
        <name>FMN</name>
        <dbReference type="ChEBI" id="CHEBI:58210"/>
    </ligand>
</feature>
<feature type="binding site" evidence="1">
    <location>
        <position position="120"/>
    </location>
    <ligand>
        <name>substrate</name>
    </ligand>
</feature>
<feature type="binding site" evidence="1">
    <location>
        <position position="124"/>
    </location>
    <ligand>
        <name>substrate</name>
    </ligand>
</feature>
<feature type="binding site" evidence="1">
    <location>
        <position position="128"/>
    </location>
    <ligand>
        <name>substrate</name>
    </ligand>
</feature>
<feature type="binding site" evidence="1">
    <location>
        <begin position="137"/>
        <end position="138"/>
    </location>
    <ligand>
        <name>FMN</name>
        <dbReference type="ChEBI" id="CHEBI:58210"/>
    </ligand>
</feature>
<feature type="binding site" evidence="1">
    <location>
        <position position="181"/>
    </location>
    <ligand>
        <name>FMN</name>
        <dbReference type="ChEBI" id="CHEBI:58210"/>
    </ligand>
</feature>
<feature type="binding site" evidence="1">
    <location>
        <begin position="187"/>
        <end position="189"/>
    </location>
    <ligand>
        <name>substrate</name>
    </ligand>
</feature>
<feature type="binding site" evidence="1">
    <location>
        <position position="191"/>
    </location>
    <ligand>
        <name>FMN</name>
        <dbReference type="ChEBI" id="CHEBI:58210"/>
    </ligand>
</feature>
<accession>Q0VSU8</accession>
<keyword id="KW-0285">Flavoprotein</keyword>
<keyword id="KW-0288">FMN</keyword>
<keyword id="KW-0560">Oxidoreductase</keyword>
<keyword id="KW-0664">Pyridoxine biosynthesis</keyword>
<keyword id="KW-1185">Reference proteome</keyword>
<sequence>MKDVREEYHADGLIEATLHDDPLEQARRWVDEAIEAELPLPNAITLATVSANGQPSSRVVLLKGIENQGFTFFTHYDSRKGEEIAANPKVSFTMFWQPFDRQMIVIGEAQKVDQEESDSYFASRPYASQVSAAISPQSRPASREWLEAEVSRLEQEFPSAPVPRPEQWGGYRIIPTEIQFWHGRPSRLHDRFRYVKQGDGCWQRERLAP</sequence>
<organism>
    <name type="scientific">Alcanivorax borkumensis (strain ATCC 700651 / DSM 11573 / NCIMB 13689 / SK2)</name>
    <dbReference type="NCBI Taxonomy" id="393595"/>
    <lineage>
        <taxon>Bacteria</taxon>
        <taxon>Pseudomonadati</taxon>
        <taxon>Pseudomonadota</taxon>
        <taxon>Gammaproteobacteria</taxon>
        <taxon>Oceanospirillales</taxon>
        <taxon>Alcanivoracaceae</taxon>
        <taxon>Alcanivorax</taxon>
    </lineage>
</organism>
<evidence type="ECO:0000255" key="1">
    <source>
        <dbReference type="HAMAP-Rule" id="MF_01629"/>
    </source>
</evidence>
<reference key="1">
    <citation type="journal article" date="2006" name="Nat. Biotechnol.">
        <title>Genome sequence of the ubiquitous hydrocarbon-degrading marine bacterium Alcanivorax borkumensis.</title>
        <authorList>
            <person name="Schneiker S."/>
            <person name="Martins dos Santos V.A.P."/>
            <person name="Bartels D."/>
            <person name="Bekel T."/>
            <person name="Brecht M."/>
            <person name="Buhrmester J."/>
            <person name="Chernikova T.N."/>
            <person name="Denaro R."/>
            <person name="Ferrer M."/>
            <person name="Gertler C."/>
            <person name="Goesmann A."/>
            <person name="Golyshina O.V."/>
            <person name="Kaminski F."/>
            <person name="Khachane A.N."/>
            <person name="Lang S."/>
            <person name="Linke B."/>
            <person name="McHardy A.C."/>
            <person name="Meyer F."/>
            <person name="Nechitaylo T."/>
            <person name="Puehler A."/>
            <person name="Regenhardt D."/>
            <person name="Rupp O."/>
            <person name="Sabirova J.S."/>
            <person name="Selbitschka W."/>
            <person name="Yakimov M.M."/>
            <person name="Timmis K.N."/>
            <person name="Vorhoelter F.-J."/>
            <person name="Weidner S."/>
            <person name="Kaiser O."/>
            <person name="Golyshin P.N."/>
        </authorList>
    </citation>
    <scope>NUCLEOTIDE SEQUENCE [LARGE SCALE GENOMIC DNA]</scope>
    <source>
        <strain>ATCC 700651 / DSM 11573 / NCIMB 13689 / SK2</strain>
    </source>
</reference>
<dbReference type="EC" id="1.4.3.5" evidence="1"/>
<dbReference type="EMBL" id="AM286690">
    <property type="protein sequence ID" value="CAL15750.1"/>
    <property type="molecule type" value="Genomic_DNA"/>
</dbReference>
<dbReference type="RefSeq" id="WP_011587598.1">
    <property type="nucleotide sequence ID" value="NC_008260.1"/>
</dbReference>
<dbReference type="SMR" id="Q0VSU8"/>
<dbReference type="STRING" id="393595.ABO_0302"/>
<dbReference type="KEGG" id="abo:ABO_0302"/>
<dbReference type="eggNOG" id="COG0259">
    <property type="taxonomic scope" value="Bacteria"/>
</dbReference>
<dbReference type="HOGENOM" id="CLU_032263_2_2_6"/>
<dbReference type="OrthoDB" id="9780392at2"/>
<dbReference type="UniPathway" id="UPA01068">
    <property type="reaction ID" value="UER00304"/>
</dbReference>
<dbReference type="UniPathway" id="UPA01068">
    <property type="reaction ID" value="UER00305"/>
</dbReference>
<dbReference type="Proteomes" id="UP000008871">
    <property type="component" value="Chromosome"/>
</dbReference>
<dbReference type="GO" id="GO:0010181">
    <property type="term" value="F:FMN binding"/>
    <property type="evidence" value="ECO:0007669"/>
    <property type="project" value="UniProtKB-UniRule"/>
</dbReference>
<dbReference type="GO" id="GO:0004733">
    <property type="term" value="F:pyridoxamine phosphate oxidase activity"/>
    <property type="evidence" value="ECO:0007669"/>
    <property type="project" value="UniProtKB-UniRule"/>
</dbReference>
<dbReference type="GO" id="GO:0008615">
    <property type="term" value="P:pyridoxine biosynthetic process"/>
    <property type="evidence" value="ECO:0007669"/>
    <property type="project" value="UniProtKB-KW"/>
</dbReference>
<dbReference type="Gene3D" id="2.30.110.10">
    <property type="entry name" value="Electron Transport, Fmn-binding Protein, Chain A"/>
    <property type="match status" value="1"/>
</dbReference>
<dbReference type="HAMAP" id="MF_01629">
    <property type="entry name" value="PdxH"/>
    <property type="match status" value="1"/>
</dbReference>
<dbReference type="InterPro" id="IPR000659">
    <property type="entry name" value="Pyridox_Oxase"/>
</dbReference>
<dbReference type="InterPro" id="IPR011576">
    <property type="entry name" value="Pyridox_Oxase_N"/>
</dbReference>
<dbReference type="InterPro" id="IPR019576">
    <property type="entry name" value="Pyridoxamine_oxidase_dimer_C"/>
</dbReference>
<dbReference type="InterPro" id="IPR012349">
    <property type="entry name" value="Split_barrel_FMN-bd"/>
</dbReference>
<dbReference type="NCBIfam" id="TIGR00558">
    <property type="entry name" value="pdxH"/>
    <property type="match status" value="1"/>
</dbReference>
<dbReference type="NCBIfam" id="NF004231">
    <property type="entry name" value="PRK05679.1"/>
    <property type="match status" value="1"/>
</dbReference>
<dbReference type="PANTHER" id="PTHR10851:SF0">
    <property type="entry name" value="PYRIDOXINE-5'-PHOSPHATE OXIDASE"/>
    <property type="match status" value="1"/>
</dbReference>
<dbReference type="PANTHER" id="PTHR10851">
    <property type="entry name" value="PYRIDOXINE-5-PHOSPHATE OXIDASE"/>
    <property type="match status" value="1"/>
</dbReference>
<dbReference type="Pfam" id="PF10590">
    <property type="entry name" value="PNP_phzG_C"/>
    <property type="match status" value="1"/>
</dbReference>
<dbReference type="Pfam" id="PF01243">
    <property type="entry name" value="PNPOx_N"/>
    <property type="match status" value="1"/>
</dbReference>
<dbReference type="PIRSF" id="PIRSF000190">
    <property type="entry name" value="Pyd_amn-ph_oxd"/>
    <property type="match status" value="1"/>
</dbReference>
<dbReference type="SUPFAM" id="SSF50475">
    <property type="entry name" value="FMN-binding split barrel"/>
    <property type="match status" value="1"/>
</dbReference>
<comment type="function">
    <text evidence="1">Catalyzes the oxidation of either pyridoxine 5'-phosphate (PNP) or pyridoxamine 5'-phosphate (PMP) into pyridoxal 5'-phosphate (PLP).</text>
</comment>
<comment type="catalytic activity">
    <reaction evidence="1">
        <text>pyridoxamine 5'-phosphate + O2 + H2O = pyridoxal 5'-phosphate + H2O2 + NH4(+)</text>
        <dbReference type="Rhea" id="RHEA:15817"/>
        <dbReference type="ChEBI" id="CHEBI:15377"/>
        <dbReference type="ChEBI" id="CHEBI:15379"/>
        <dbReference type="ChEBI" id="CHEBI:16240"/>
        <dbReference type="ChEBI" id="CHEBI:28938"/>
        <dbReference type="ChEBI" id="CHEBI:58451"/>
        <dbReference type="ChEBI" id="CHEBI:597326"/>
        <dbReference type="EC" id="1.4.3.5"/>
    </reaction>
</comment>
<comment type="catalytic activity">
    <reaction evidence="1">
        <text>pyridoxine 5'-phosphate + O2 = pyridoxal 5'-phosphate + H2O2</text>
        <dbReference type="Rhea" id="RHEA:15149"/>
        <dbReference type="ChEBI" id="CHEBI:15379"/>
        <dbReference type="ChEBI" id="CHEBI:16240"/>
        <dbReference type="ChEBI" id="CHEBI:58589"/>
        <dbReference type="ChEBI" id="CHEBI:597326"/>
        <dbReference type="EC" id="1.4.3.5"/>
    </reaction>
</comment>
<comment type="cofactor">
    <cofactor evidence="1">
        <name>FMN</name>
        <dbReference type="ChEBI" id="CHEBI:58210"/>
    </cofactor>
    <text evidence="1">Binds 1 FMN per subunit.</text>
</comment>
<comment type="pathway">
    <text evidence="1">Cofactor metabolism; pyridoxal 5'-phosphate salvage; pyridoxal 5'-phosphate from pyridoxamine 5'-phosphate: step 1/1.</text>
</comment>
<comment type="pathway">
    <text evidence="1">Cofactor metabolism; pyridoxal 5'-phosphate salvage; pyridoxal 5'-phosphate from pyridoxine 5'-phosphate: step 1/1.</text>
</comment>
<comment type="subunit">
    <text evidence="1">Homodimer.</text>
</comment>
<comment type="similarity">
    <text evidence="1">Belongs to the pyridoxamine 5'-phosphate oxidase family.</text>
</comment>
<proteinExistence type="inferred from homology"/>
<gene>
    <name evidence="1" type="primary">pdxH</name>
    <name type="ordered locus">ABO_0302</name>
</gene>
<name>PDXH_ALCBS</name>